<name>NLTP6_GOSHI</name>
<proteinExistence type="evidence at transcript level"/>
<dbReference type="EMBL" id="U64874">
    <property type="protein sequence ID" value="AAB66907.1"/>
    <property type="molecule type" value="Genomic_DNA"/>
</dbReference>
<dbReference type="PIR" id="T10814">
    <property type="entry name" value="T10814"/>
</dbReference>
<dbReference type="SMR" id="O24418"/>
<dbReference type="STRING" id="3635.O24418"/>
<dbReference type="PaxDb" id="3635-O24418"/>
<dbReference type="GeneID" id="107916114"/>
<dbReference type="KEGG" id="ghi:107916114"/>
<dbReference type="Proteomes" id="UP000189702">
    <property type="component" value="Unplaced"/>
</dbReference>
<dbReference type="GO" id="GO:0008289">
    <property type="term" value="F:lipid binding"/>
    <property type="evidence" value="ECO:0007669"/>
    <property type="project" value="UniProtKB-KW"/>
</dbReference>
<dbReference type="GO" id="GO:0006869">
    <property type="term" value="P:lipid transport"/>
    <property type="evidence" value="ECO:0007669"/>
    <property type="project" value="InterPro"/>
</dbReference>
<dbReference type="CDD" id="cd01960">
    <property type="entry name" value="nsLTP1"/>
    <property type="match status" value="1"/>
</dbReference>
<dbReference type="Gene3D" id="1.10.110.10">
    <property type="entry name" value="Plant lipid-transfer and hydrophobic proteins"/>
    <property type="match status" value="1"/>
</dbReference>
<dbReference type="InterPro" id="IPR036312">
    <property type="entry name" value="Bifun_inhib/LTP/seed_sf"/>
</dbReference>
<dbReference type="InterPro" id="IPR016140">
    <property type="entry name" value="Bifunc_inhib/LTP/seed_store"/>
</dbReference>
<dbReference type="InterPro" id="IPR000528">
    <property type="entry name" value="Plant_nsLTP"/>
</dbReference>
<dbReference type="PANTHER" id="PTHR33076">
    <property type="entry name" value="NON-SPECIFIC LIPID-TRANSFER PROTEIN 2-RELATED"/>
    <property type="match status" value="1"/>
</dbReference>
<dbReference type="Pfam" id="PF00234">
    <property type="entry name" value="Tryp_alpha_amyl"/>
    <property type="match status" value="1"/>
</dbReference>
<dbReference type="PRINTS" id="PR00382">
    <property type="entry name" value="LIPIDTRNSFER"/>
</dbReference>
<dbReference type="SUPFAM" id="SSF47699">
    <property type="entry name" value="Bifunctional inhibitor/lipid-transfer protein/seed storage 2S albumin"/>
    <property type="match status" value="1"/>
</dbReference>
<dbReference type="PROSITE" id="PS00597">
    <property type="entry name" value="PLANT_LTP"/>
    <property type="match status" value="1"/>
</dbReference>
<evidence type="ECO:0000250" key="1"/>
<evidence type="ECO:0000255" key="2"/>
<evidence type="ECO:0000305" key="3"/>
<reference key="1">
    <citation type="journal article" date="1997" name="Biochim. Biophys. Acta">
        <title>Cloning and characterization of a cotton lipid transfer protein gene specifically expressed in fiber cells.</title>
        <authorList>
            <person name="Ma D.-P."/>
            <person name="Liu H.-C."/>
            <person name="Tan H."/>
            <person name="Greech R.G."/>
            <person name="Jenkins J.N."/>
            <person name="Chang Y.-F."/>
        </authorList>
    </citation>
    <scope>NUCLEOTIDE SEQUENCE [GENOMIC DNA]</scope>
</reference>
<accession>O24418</accession>
<sequence>MARSMSLKLACVVVLCLLVDAPLAQGAISYDQVKSSLLPCVGYVRGNNARPAPPNYCKGIRSLKSAARIRLDRQAACKCIKSLAADISDINYGVAAGLPGQCNVHIPYKISPSIDCKRVK</sequence>
<organism>
    <name type="scientific">Gossypium hirsutum</name>
    <name type="common">Upland cotton</name>
    <name type="synonym">Gossypium mexicanum</name>
    <dbReference type="NCBI Taxonomy" id="3635"/>
    <lineage>
        <taxon>Eukaryota</taxon>
        <taxon>Viridiplantae</taxon>
        <taxon>Streptophyta</taxon>
        <taxon>Embryophyta</taxon>
        <taxon>Tracheophyta</taxon>
        <taxon>Spermatophyta</taxon>
        <taxon>Magnoliopsida</taxon>
        <taxon>eudicotyledons</taxon>
        <taxon>Gunneridae</taxon>
        <taxon>Pentapetalae</taxon>
        <taxon>rosids</taxon>
        <taxon>malvids</taxon>
        <taxon>Malvales</taxon>
        <taxon>Malvaceae</taxon>
        <taxon>Malvoideae</taxon>
        <taxon>Gossypium</taxon>
    </lineage>
</organism>
<keyword id="KW-1015">Disulfide bond</keyword>
<keyword id="KW-0446">Lipid-binding</keyword>
<keyword id="KW-1185">Reference proteome</keyword>
<keyword id="KW-0732">Signal</keyword>
<keyword id="KW-0813">Transport</keyword>
<gene>
    <name type="primary">LTP6</name>
</gene>
<protein>
    <recommendedName>
        <fullName>Non-specific lipid-transfer protein 6</fullName>
        <shortName>LTP</shortName>
    </recommendedName>
</protein>
<comment type="function">
    <text evidence="1">Plant non-specific lipid-transfer proteins transfer phospholipids as well as galactolipids across membranes. May play a role in wax or cutin deposition in the cell walls of expanding epidermal cells and certain secretory tissues (By similarity).</text>
</comment>
<comment type="tissue specificity">
    <text>Specifically expressed in fiber cells.</text>
</comment>
<comment type="similarity">
    <text evidence="3">Belongs to the plant LTP family.</text>
</comment>
<feature type="signal peptide" evidence="2">
    <location>
        <begin position="1"/>
        <end position="26"/>
    </location>
</feature>
<feature type="chain" id="PRO_0000018379" description="Non-specific lipid-transfer protein 6">
    <location>
        <begin position="27"/>
        <end position="120"/>
    </location>
</feature>
<feature type="disulfide bond" evidence="1">
    <location>
        <begin position="57"/>
        <end position="102"/>
    </location>
</feature>
<feature type="disulfide bond" evidence="1">
    <location>
        <begin position="77"/>
        <end position="116"/>
    </location>
</feature>